<sequence length="415" mass="45705">MNLNDTFAAVQAAGRHLALLPDDRINQILNAVAEAALEQTSYILSENRKDLERMSPDNPKYDRLRLTEERLRGIASDIRNVATLPSPLGRILKESIRPNGMRLTKISVPFGVIGIIYEARPNVSFDVFSLCLKSGNACILKGGSDADYSNRAIVEVIHQVLRQFNIDTHMVELLPADREATRELLHATGYVDLIIPRGSSALINFVRQNATIPVIETGAGICHTYFDEYGDTAKGAAIIHNAKTRRVSVCNALDCVIVHESRLSDLPLLCEKLKADKVIIYADPSAYQALEGHYPAGLLKPATPESFGTEFLDYKMAIKTVNSFENALGHIQEYSSRHSESIVTENPERAALFTRMVDAACVYTNVSTAFTDGAQFGLGAEIGISTQKLHARGPMGLEEITSYKWIIEGDGQTRQ</sequence>
<feature type="chain" id="PRO_0000189690" description="Gamma-glutamyl phosphate reductase">
    <location>
        <begin position="1"/>
        <end position="415"/>
    </location>
</feature>
<dbReference type="EC" id="1.2.1.41" evidence="1"/>
<dbReference type="EMBL" id="AP006841">
    <property type="protein sequence ID" value="BAD47247.1"/>
    <property type="molecule type" value="Genomic_DNA"/>
</dbReference>
<dbReference type="RefSeq" id="WP_010992045.1">
    <property type="nucleotide sequence ID" value="NC_006347.1"/>
</dbReference>
<dbReference type="RefSeq" id="YP_097781.1">
    <property type="nucleotide sequence ID" value="NC_006347.1"/>
</dbReference>
<dbReference type="SMR" id="Q64Z29"/>
<dbReference type="STRING" id="295405.BF0498"/>
<dbReference type="KEGG" id="bfr:BF0498"/>
<dbReference type="PATRIC" id="fig|295405.11.peg.514"/>
<dbReference type="HOGENOM" id="CLU_030231_0_0_10"/>
<dbReference type="OrthoDB" id="9809970at2"/>
<dbReference type="UniPathway" id="UPA00098">
    <property type="reaction ID" value="UER00360"/>
</dbReference>
<dbReference type="Proteomes" id="UP000002197">
    <property type="component" value="Chromosome"/>
</dbReference>
<dbReference type="GO" id="GO:0005737">
    <property type="term" value="C:cytoplasm"/>
    <property type="evidence" value="ECO:0007669"/>
    <property type="project" value="UniProtKB-SubCell"/>
</dbReference>
<dbReference type="GO" id="GO:0004350">
    <property type="term" value="F:glutamate-5-semialdehyde dehydrogenase activity"/>
    <property type="evidence" value="ECO:0007669"/>
    <property type="project" value="UniProtKB-UniRule"/>
</dbReference>
<dbReference type="GO" id="GO:0050661">
    <property type="term" value="F:NADP binding"/>
    <property type="evidence" value="ECO:0007669"/>
    <property type="project" value="InterPro"/>
</dbReference>
<dbReference type="GO" id="GO:0055129">
    <property type="term" value="P:L-proline biosynthetic process"/>
    <property type="evidence" value="ECO:0007669"/>
    <property type="project" value="UniProtKB-UniRule"/>
</dbReference>
<dbReference type="CDD" id="cd07079">
    <property type="entry name" value="ALDH_F18-19_ProA-GPR"/>
    <property type="match status" value="1"/>
</dbReference>
<dbReference type="Gene3D" id="3.40.605.10">
    <property type="entry name" value="Aldehyde Dehydrogenase, Chain A, domain 1"/>
    <property type="match status" value="1"/>
</dbReference>
<dbReference type="Gene3D" id="3.40.309.10">
    <property type="entry name" value="Aldehyde Dehydrogenase, Chain A, domain 2"/>
    <property type="match status" value="1"/>
</dbReference>
<dbReference type="HAMAP" id="MF_00412">
    <property type="entry name" value="ProA"/>
    <property type="match status" value="1"/>
</dbReference>
<dbReference type="InterPro" id="IPR016161">
    <property type="entry name" value="Ald_DH/histidinol_DH"/>
</dbReference>
<dbReference type="InterPro" id="IPR016163">
    <property type="entry name" value="Ald_DH_C"/>
</dbReference>
<dbReference type="InterPro" id="IPR016162">
    <property type="entry name" value="Ald_DH_N"/>
</dbReference>
<dbReference type="InterPro" id="IPR020593">
    <property type="entry name" value="G-glutamylP_reductase_CS"/>
</dbReference>
<dbReference type="InterPro" id="IPR012134">
    <property type="entry name" value="Glu-5-SA_DH"/>
</dbReference>
<dbReference type="InterPro" id="IPR000965">
    <property type="entry name" value="GPR_dom"/>
</dbReference>
<dbReference type="NCBIfam" id="NF001221">
    <property type="entry name" value="PRK00197.1"/>
    <property type="match status" value="1"/>
</dbReference>
<dbReference type="NCBIfam" id="TIGR00407">
    <property type="entry name" value="proA"/>
    <property type="match status" value="1"/>
</dbReference>
<dbReference type="PANTHER" id="PTHR11063:SF8">
    <property type="entry name" value="DELTA-1-PYRROLINE-5-CARBOXYLATE SYNTHASE"/>
    <property type="match status" value="1"/>
</dbReference>
<dbReference type="PANTHER" id="PTHR11063">
    <property type="entry name" value="GLUTAMATE SEMIALDEHYDE DEHYDROGENASE"/>
    <property type="match status" value="1"/>
</dbReference>
<dbReference type="PIRSF" id="PIRSF000151">
    <property type="entry name" value="GPR"/>
    <property type="match status" value="1"/>
</dbReference>
<dbReference type="SUPFAM" id="SSF53720">
    <property type="entry name" value="ALDH-like"/>
    <property type="match status" value="1"/>
</dbReference>
<dbReference type="PROSITE" id="PS01223">
    <property type="entry name" value="PROA"/>
    <property type="match status" value="1"/>
</dbReference>
<gene>
    <name evidence="1" type="primary">proA</name>
    <name type="ordered locus">BF0498</name>
</gene>
<reference key="1">
    <citation type="journal article" date="2004" name="Proc. Natl. Acad. Sci. U.S.A.">
        <title>Genomic analysis of Bacteroides fragilis reveals extensive DNA inversions regulating cell surface adaptation.</title>
        <authorList>
            <person name="Kuwahara T."/>
            <person name="Yamashita A."/>
            <person name="Hirakawa H."/>
            <person name="Nakayama H."/>
            <person name="Toh H."/>
            <person name="Okada N."/>
            <person name="Kuhara S."/>
            <person name="Hattori M."/>
            <person name="Hayashi T."/>
            <person name="Ohnishi Y."/>
        </authorList>
    </citation>
    <scope>NUCLEOTIDE SEQUENCE [LARGE SCALE GENOMIC DNA]</scope>
    <source>
        <strain>YCH46</strain>
    </source>
</reference>
<proteinExistence type="inferred from homology"/>
<accession>Q64Z29</accession>
<organism>
    <name type="scientific">Bacteroides fragilis (strain YCH46)</name>
    <dbReference type="NCBI Taxonomy" id="295405"/>
    <lineage>
        <taxon>Bacteria</taxon>
        <taxon>Pseudomonadati</taxon>
        <taxon>Bacteroidota</taxon>
        <taxon>Bacteroidia</taxon>
        <taxon>Bacteroidales</taxon>
        <taxon>Bacteroidaceae</taxon>
        <taxon>Bacteroides</taxon>
    </lineage>
</organism>
<keyword id="KW-0028">Amino-acid biosynthesis</keyword>
<keyword id="KW-0963">Cytoplasm</keyword>
<keyword id="KW-0521">NADP</keyword>
<keyword id="KW-0560">Oxidoreductase</keyword>
<keyword id="KW-0641">Proline biosynthesis</keyword>
<name>PROA_BACFR</name>
<protein>
    <recommendedName>
        <fullName evidence="1">Gamma-glutamyl phosphate reductase</fullName>
        <shortName evidence="1">GPR</shortName>
        <ecNumber evidence="1">1.2.1.41</ecNumber>
    </recommendedName>
    <alternativeName>
        <fullName evidence="1">Glutamate-5-semialdehyde dehydrogenase</fullName>
    </alternativeName>
    <alternativeName>
        <fullName evidence="1">Glutamyl-gamma-semialdehyde dehydrogenase</fullName>
        <shortName evidence="1">GSA dehydrogenase</shortName>
    </alternativeName>
</protein>
<comment type="function">
    <text evidence="1">Catalyzes the NADPH-dependent reduction of L-glutamate 5-phosphate into L-glutamate 5-semialdehyde and phosphate. The product spontaneously undergoes cyclization to form 1-pyrroline-5-carboxylate.</text>
</comment>
<comment type="catalytic activity">
    <reaction evidence="1">
        <text>L-glutamate 5-semialdehyde + phosphate + NADP(+) = L-glutamyl 5-phosphate + NADPH + H(+)</text>
        <dbReference type="Rhea" id="RHEA:19541"/>
        <dbReference type="ChEBI" id="CHEBI:15378"/>
        <dbReference type="ChEBI" id="CHEBI:43474"/>
        <dbReference type="ChEBI" id="CHEBI:57783"/>
        <dbReference type="ChEBI" id="CHEBI:58066"/>
        <dbReference type="ChEBI" id="CHEBI:58274"/>
        <dbReference type="ChEBI" id="CHEBI:58349"/>
        <dbReference type="EC" id="1.2.1.41"/>
    </reaction>
</comment>
<comment type="pathway">
    <text evidence="1">Amino-acid biosynthesis; L-proline biosynthesis; L-glutamate 5-semialdehyde from L-glutamate: step 2/2.</text>
</comment>
<comment type="subcellular location">
    <subcellularLocation>
        <location evidence="1">Cytoplasm</location>
    </subcellularLocation>
</comment>
<comment type="similarity">
    <text evidence="1">Belongs to the gamma-glutamyl phosphate reductase family.</text>
</comment>
<evidence type="ECO:0000255" key="1">
    <source>
        <dbReference type="HAMAP-Rule" id="MF_00412"/>
    </source>
</evidence>